<gene>
    <name type="ordered locus">VIBHAR_03078</name>
</gene>
<sequence>MSTPFWQSKSLEHMTEEEWESLCDGCGKCCLHKLMDEDTDEIYYTNVACSWLNSKTCSCKDYPNRFTSGEECTKLTREDIDDFTWLPHTCAYRLLAENQPLPEWHPLITGSKSAMHAAGESVRNKVVYEIDVVDWEDHIQNLPDRLKPHN</sequence>
<proteinExistence type="inferred from homology"/>
<feature type="chain" id="PRO_1000044816" description="UPF0260 protein VIBHAR_03078">
    <location>
        <begin position="1"/>
        <end position="150"/>
    </location>
</feature>
<accession>A7MUF3</accession>
<protein>
    <recommendedName>
        <fullName evidence="1">UPF0260 protein VIBHAR_03078</fullName>
    </recommendedName>
</protein>
<evidence type="ECO:0000255" key="1">
    <source>
        <dbReference type="HAMAP-Rule" id="MF_00676"/>
    </source>
</evidence>
<name>Y3078_VIBC1</name>
<organism>
    <name type="scientific">Vibrio campbellii (strain ATCC BAA-1116)</name>
    <dbReference type="NCBI Taxonomy" id="2902295"/>
    <lineage>
        <taxon>Bacteria</taxon>
        <taxon>Pseudomonadati</taxon>
        <taxon>Pseudomonadota</taxon>
        <taxon>Gammaproteobacteria</taxon>
        <taxon>Vibrionales</taxon>
        <taxon>Vibrionaceae</taxon>
        <taxon>Vibrio</taxon>
    </lineage>
</organism>
<comment type="similarity">
    <text evidence="1">Belongs to the UPF0260 family.</text>
</comment>
<dbReference type="EMBL" id="CP000789">
    <property type="protein sequence ID" value="ABU72028.1"/>
    <property type="molecule type" value="Genomic_DNA"/>
</dbReference>
<dbReference type="RefSeq" id="WP_012128588.1">
    <property type="nucleotide sequence ID" value="NC_009783.1"/>
</dbReference>
<dbReference type="KEGG" id="vha:VIBHAR_03078"/>
<dbReference type="PATRIC" id="fig|338187.25.peg.3112"/>
<dbReference type="Proteomes" id="UP000008152">
    <property type="component" value="Chromosome I"/>
</dbReference>
<dbReference type="HAMAP" id="MF_00676">
    <property type="entry name" value="UPF0260"/>
    <property type="match status" value="1"/>
</dbReference>
<dbReference type="InterPro" id="IPR005358">
    <property type="entry name" value="Puta_zinc/iron-chelating_dom"/>
</dbReference>
<dbReference type="InterPro" id="IPR008228">
    <property type="entry name" value="UCP006173"/>
</dbReference>
<dbReference type="NCBIfam" id="NF003501">
    <property type="entry name" value="PRK05170.1-5"/>
    <property type="match status" value="1"/>
</dbReference>
<dbReference type="NCBIfam" id="NF003503">
    <property type="entry name" value="PRK05170.2-1"/>
    <property type="match status" value="1"/>
</dbReference>
<dbReference type="NCBIfam" id="NF003507">
    <property type="entry name" value="PRK05170.2-5"/>
    <property type="match status" value="1"/>
</dbReference>
<dbReference type="PANTHER" id="PTHR37421">
    <property type="entry name" value="UPF0260 PROTEIN YCGN"/>
    <property type="match status" value="1"/>
</dbReference>
<dbReference type="PANTHER" id="PTHR37421:SF1">
    <property type="entry name" value="UPF0260 PROTEIN YCGN"/>
    <property type="match status" value="1"/>
</dbReference>
<dbReference type="Pfam" id="PF03692">
    <property type="entry name" value="CxxCxxCC"/>
    <property type="match status" value="1"/>
</dbReference>
<dbReference type="PIRSF" id="PIRSF006173">
    <property type="entry name" value="UCP006173"/>
    <property type="match status" value="1"/>
</dbReference>
<reference key="1">
    <citation type="submission" date="2007-08" db="EMBL/GenBank/DDBJ databases">
        <authorList>
            <consortium name="The Vibrio harveyi Genome Sequencing Project"/>
            <person name="Bassler B."/>
            <person name="Clifton S.W."/>
            <person name="Fulton L."/>
            <person name="Delehaunty K."/>
            <person name="Fronick C."/>
            <person name="Harrison M."/>
            <person name="Markivic C."/>
            <person name="Fulton R."/>
            <person name="Tin-Wollam A.-M."/>
            <person name="Shah N."/>
            <person name="Pepin K."/>
            <person name="Nash W."/>
            <person name="Thiruvilangam P."/>
            <person name="Bhonagiri V."/>
            <person name="Waters C."/>
            <person name="Tu K.C."/>
            <person name="Irgon J."/>
            <person name="Wilson R.K."/>
        </authorList>
    </citation>
    <scope>NUCLEOTIDE SEQUENCE [LARGE SCALE GENOMIC DNA]</scope>
    <source>
        <strain>ATCC BAA-1116 / BB120</strain>
    </source>
</reference>